<evidence type="ECO:0000255" key="1">
    <source>
        <dbReference type="HAMAP-Rule" id="MF_00147"/>
    </source>
</evidence>
<accession>Q7NAQ4</accession>
<sequence>MNSMKRYIFGNWKTYKTTQEVKEFFSVLNQTKLTKNPDVVFGVAPVFVHLGLANQLERNECLVLAQDANYVMNKANTGTVSYEQLKDIGVNYVIIGHSERRKLFHESDELINQKVKTLLENKMRPILCIGETLEEYEANKTKAVLKDQLEKDLKGIDSSLLKDLIIAYEPVWAIGTGKTASSQTAQDAIAYIRTVLGLLSSKTIANELPILYGGSVTPDNVSELLAQKDINGALVGGASLDPHKFIQLIEAK</sequence>
<organism>
    <name type="scientific">Mycoplasmoides gallisepticum (strain R(low / passage 15 / clone 2))</name>
    <name type="common">Mycoplasma gallisepticum</name>
    <dbReference type="NCBI Taxonomy" id="710127"/>
    <lineage>
        <taxon>Bacteria</taxon>
        <taxon>Bacillati</taxon>
        <taxon>Mycoplasmatota</taxon>
        <taxon>Mycoplasmoidales</taxon>
        <taxon>Mycoplasmoidaceae</taxon>
        <taxon>Mycoplasmoides</taxon>
    </lineage>
</organism>
<comment type="function">
    <text evidence="1">Involved in the gluconeogenesis. Catalyzes stereospecifically the conversion of dihydroxyacetone phosphate (DHAP) to D-glyceraldehyde-3-phosphate (G3P).</text>
</comment>
<comment type="catalytic activity">
    <reaction evidence="1">
        <text>D-glyceraldehyde 3-phosphate = dihydroxyacetone phosphate</text>
        <dbReference type="Rhea" id="RHEA:18585"/>
        <dbReference type="ChEBI" id="CHEBI:57642"/>
        <dbReference type="ChEBI" id="CHEBI:59776"/>
        <dbReference type="EC" id="5.3.1.1"/>
    </reaction>
</comment>
<comment type="pathway">
    <text evidence="1">Carbohydrate biosynthesis; gluconeogenesis.</text>
</comment>
<comment type="pathway">
    <text evidence="1">Carbohydrate degradation; glycolysis; D-glyceraldehyde 3-phosphate from glycerone phosphate: step 1/1.</text>
</comment>
<comment type="subunit">
    <text evidence="1">Homodimer.</text>
</comment>
<comment type="subcellular location">
    <subcellularLocation>
        <location evidence="1">Cytoplasm</location>
    </subcellularLocation>
</comment>
<comment type="similarity">
    <text evidence="1">Belongs to the triosephosphate isomerase family.</text>
</comment>
<gene>
    <name evidence="1" type="primary">tpiA</name>
    <name type="ordered locus">MYCGA5810</name>
    <name type="ORF">MGA_0357</name>
</gene>
<protein>
    <recommendedName>
        <fullName evidence="1">Triosephosphate isomerase</fullName>
        <shortName evidence="1">TIM</shortName>
        <shortName evidence="1">TPI</shortName>
        <ecNumber evidence="1">5.3.1.1</ecNumber>
    </recommendedName>
    <alternativeName>
        <fullName evidence="1">Triose-phosphate isomerase</fullName>
    </alternativeName>
</protein>
<keyword id="KW-0963">Cytoplasm</keyword>
<keyword id="KW-0312">Gluconeogenesis</keyword>
<keyword id="KW-0324">Glycolysis</keyword>
<keyword id="KW-0413">Isomerase</keyword>
<keyword id="KW-1185">Reference proteome</keyword>
<name>TPIS_MYCGA</name>
<proteinExistence type="inferred from homology"/>
<dbReference type="EC" id="5.3.1.1" evidence="1"/>
<dbReference type="EMBL" id="AE015450">
    <property type="protein sequence ID" value="AAP56931.1"/>
    <property type="molecule type" value="Genomic_DNA"/>
</dbReference>
<dbReference type="RefSeq" id="WP_011113838.1">
    <property type="nucleotide sequence ID" value="NC_004829.2"/>
</dbReference>
<dbReference type="SMR" id="Q7NAQ4"/>
<dbReference type="KEGG" id="mga:MGA_0357"/>
<dbReference type="PATRIC" id="fig|233150.7.peg.653"/>
<dbReference type="HOGENOM" id="CLU_024251_2_3_14"/>
<dbReference type="OrthoDB" id="9809429at2"/>
<dbReference type="BRENDA" id="5.3.1.1">
    <property type="organism ID" value="3527"/>
</dbReference>
<dbReference type="UniPathway" id="UPA00109">
    <property type="reaction ID" value="UER00189"/>
</dbReference>
<dbReference type="UniPathway" id="UPA00138"/>
<dbReference type="Proteomes" id="UP000001418">
    <property type="component" value="Chromosome"/>
</dbReference>
<dbReference type="GO" id="GO:0005829">
    <property type="term" value="C:cytosol"/>
    <property type="evidence" value="ECO:0007669"/>
    <property type="project" value="TreeGrafter"/>
</dbReference>
<dbReference type="GO" id="GO:0004807">
    <property type="term" value="F:triose-phosphate isomerase activity"/>
    <property type="evidence" value="ECO:0007669"/>
    <property type="project" value="UniProtKB-UniRule"/>
</dbReference>
<dbReference type="GO" id="GO:0006094">
    <property type="term" value="P:gluconeogenesis"/>
    <property type="evidence" value="ECO:0007669"/>
    <property type="project" value="UniProtKB-UniRule"/>
</dbReference>
<dbReference type="GO" id="GO:0046166">
    <property type="term" value="P:glyceraldehyde-3-phosphate biosynthetic process"/>
    <property type="evidence" value="ECO:0007669"/>
    <property type="project" value="TreeGrafter"/>
</dbReference>
<dbReference type="GO" id="GO:0019563">
    <property type="term" value="P:glycerol catabolic process"/>
    <property type="evidence" value="ECO:0007669"/>
    <property type="project" value="TreeGrafter"/>
</dbReference>
<dbReference type="GO" id="GO:0006096">
    <property type="term" value="P:glycolytic process"/>
    <property type="evidence" value="ECO:0007669"/>
    <property type="project" value="UniProtKB-UniRule"/>
</dbReference>
<dbReference type="CDD" id="cd00311">
    <property type="entry name" value="TIM"/>
    <property type="match status" value="1"/>
</dbReference>
<dbReference type="FunFam" id="3.20.20.70:FF:000016">
    <property type="entry name" value="Triosephosphate isomerase"/>
    <property type="match status" value="1"/>
</dbReference>
<dbReference type="Gene3D" id="3.20.20.70">
    <property type="entry name" value="Aldolase class I"/>
    <property type="match status" value="1"/>
</dbReference>
<dbReference type="HAMAP" id="MF_00147_B">
    <property type="entry name" value="TIM_B"/>
    <property type="match status" value="1"/>
</dbReference>
<dbReference type="InterPro" id="IPR013785">
    <property type="entry name" value="Aldolase_TIM"/>
</dbReference>
<dbReference type="InterPro" id="IPR035990">
    <property type="entry name" value="TIM_sf"/>
</dbReference>
<dbReference type="InterPro" id="IPR022896">
    <property type="entry name" value="TrioseP_Isoase_bac/euk"/>
</dbReference>
<dbReference type="InterPro" id="IPR000652">
    <property type="entry name" value="Triosephosphate_isomerase"/>
</dbReference>
<dbReference type="InterPro" id="IPR020861">
    <property type="entry name" value="Triosephosphate_isomerase_AS"/>
</dbReference>
<dbReference type="NCBIfam" id="TIGR00419">
    <property type="entry name" value="tim"/>
    <property type="match status" value="1"/>
</dbReference>
<dbReference type="PANTHER" id="PTHR21139">
    <property type="entry name" value="TRIOSEPHOSPHATE ISOMERASE"/>
    <property type="match status" value="1"/>
</dbReference>
<dbReference type="PANTHER" id="PTHR21139:SF42">
    <property type="entry name" value="TRIOSEPHOSPHATE ISOMERASE"/>
    <property type="match status" value="1"/>
</dbReference>
<dbReference type="Pfam" id="PF00121">
    <property type="entry name" value="TIM"/>
    <property type="match status" value="1"/>
</dbReference>
<dbReference type="SUPFAM" id="SSF51351">
    <property type="entry name" value="Triosephosphate isomerase (TIM)"/>
    <property type="match status" value="1"/>
</dbReference>
<dbReference type="PROSITE" id="PS00171">
    <property type="entry name" value="TIM_1"/>
    <property type="match status" value="1"/>
</dbReference>
<dbReference type="PROSITE" id="PS51440">
    <property type="entry name" value="TIM_2"/>
    <property type="match status" value="1"/>
</dbReference>
<reference key="1">
    <citation type="journal article" date="2003" name="Microbiology">
        <title>The complete genome sequence of the avian pathogen Mycoplasma gallisepticum strain R(low).</title>
        <authorList>
            <person name="Papazisi L."/>
            <person name="Gorton T.S."/>
            <person name="Kutish G."/>
            <person name="Markham P.F."/>
            <person name="Browning G.F."/>
            <person name="Nguyen D.K."/>
            <person name="Swartzell S."/>
            <person name="Madan A."/>
            <person name="Mahairas G."/>
            <person name="Geary S.J."/>
        </authorList>
    </citation>
    <scope>NUCLEOTIDE SEQUENCE [LARGE SCALE GENOMIC DNA]</scope>
    <source>
        <strain>R(low / passage 15 / clone 2)</strain>
    </source>
</reference>
<feature type="chain" id="PRO_0000090246" description="Triosephosphate isomerase">
    <location>
        <begin position="1"/>
        <end position="252"/>
    </location>
</feature>
<feature type="active site" description="Electrophile" evidence="1">
    <location>
        <position position="97"/>
    </location>
</feature>
<feature type="active site" description="Proton acceptor" evidence="1">
    <location>
        <position position="169"/>
    </location>
</feature>
<feature type="binding site" evidence="1">
    <location>
        <begin position="11"/>
        <end position="13"/>
    </location>
    <ligand>
        <name>substrate</name>
    </ligand>
</feature>
<feature type="binding site" evidence="1">
    <location>
        <position position="175"/>
    </location>
    <ligand>
        <name>substrate</name>
    </ligand>
</feature>
<feature type="binding site" evidence="1">
    <location>
        <position position="215"/>
    </location>
    <ligand>
        <name>substrate</name>
    </ligand>
</feature>
<feature type="binding site" evidence="1">
    <location>
        <begin position="236"/>
        <end position="237"/>
    </location>
    <ligand>
        <name>substrate</name>
    </ligand>
</feature>